<name>LAP4A_RAT</name>
<sequence length="233" mass="26784">MVSMTFKRSRSDRFYSTRCCGCCHVRTGTIILGTWYMVVNLLMAILLTVEVTHPNSMPAVNIQYEVIGNYYSSERMADNACVLFAVSVLMFIISSMLVYGAISYQVGWLIPFFCYRLFDFVLSCLVAISSLTYLPRIKEYLDQLPDFPYKDDLLALDSSCLLFIVLVFFVVFIIFKAYLINCVWNCYKYINNRNVPEIAVYPAFEAPPQYVLPTYEMAVKIPEKEPPPPYLPA</sequence>
<organism>
    <name type="scientific">Rattus norvegicus</name>
    <name type="common">Rat</name>
    <dbReference type="NCBI Taxonomy" id="10116"/>
    <lineage>
        <taxon>Eukaryota</taxon>
        <taxon>Metazoa</taxon>
        <taxon>Chordata</taxon>
        <taxon>Craniata</taxon>
        <taxon>Vertebrata</taxon>
        <taxon>Euteleostomi</taxon>
        <taxon>Mammalia</taxon>
        <taxon>Eutheria</taxon>
        <taxon>Euarchontoglires</taxon>
        <taxon>Glires</taxon>
        <taxon>Rodentia</taxon>
        <taxon>Myomorpha</taxon>
        <taxon>Muroidea</taxon>
        <taxon>Muridae</taxon>
        <taxon>Murinae</taxon>
        <taxon>Rattus</taxon>
    </lineage>
</organism>
<dbReference type="EMBL" id="BC063179">
    <property type="protein sequence ID" value="AAH63179.1"/>
    <property type="molecule type" value="mRNA"/>
</dbReference>
<dbReference type="RefSeq" id="NP_955416.1">
    <property type="nucleotide sequence ID" value="NM_199384.3"/>
</dbReference>
<dbReference type="SMR" id="Q6P501"/>
<dbReference type="BioGRID" id="256045">
    <property type="interactions" value="1"/>
</dbReference>
<dbReference type="FunCoup" id="Q6P501">
    <property type="interactions" value="2064"/>
</dbReference>
<dbReference type="STRING" id="10116.ENSRNOP00000009665"/>
<dbReference type="iPTMnet" id="Q6P501"/>
<dbReference type="PhosphoSitePlus" id="Q6P501"/>
<dbReference type="PaxDb" id="10116-ENSRNOP00000009665"/>
<dbReference type="Ensembl" id="ENSRNOT00000009665.7">
    <property type="protein sequence ID" value="ENSRNOP00000009665.5"/>
    <property type="gene ID" value="ENSRNOG00000006865.7"/>
</dbReference>
<dbReference type="GeneID" id="298875"/>
<dbReference type="KEGG" id="rno:298875"/>
<dbReference type="AGR" id="RGD:735179"/>
<dbReference type="CTD" id="9741"/>
<dbReference type="RGD" id="735179">
    <property type="gene designation" value="Laptm4a"/>
</dbReference>
<dbReference type="eggNOG" id="ENOG502QSAX">
    <property type="taxonomic scope" value="Eukaryota"/>
</dbReference>
<dbReference type="GeneTree" id="ENSGT00940000153446"/>
<dbReference type="HOGENOM" id="CLU_059239_2_0_1"/>
<dbReference type="InParanoid" id="Q6P501"/>
<dbReference type="OMA" id="NCYKYII"/>
<dbReference type="OrthoDB" id="56929at9989"/>
<dbReference type="PhylomeDB" id="Q6P501"/>
<dbReference type="PRO" id="PR:Q6P501"/>
<dbReference type="Proteomes" id="UP000002494">
    <property type="component" value="Chromosome 6"/>
</dbReference>
<dbReference type="Bgee" id="ENSRNOG00000006865">
    <property type="expression patterns" value="Expressed in ovary and 20 other cell types or tissues"/>
</dbReference>
<dbReference type="ExpressionAtlas" id="Q6P501">
    <property type="expression patterns" value="baseline and differential"/>
</dbReference>
<dbReference type="GO" id="GO:0005794">
    <property type="term" value="C:Golgi apparatus"/>
    <property type="evidence" value="ECO:0000266"/>
    <property type="project" value="RGD"/>
</dbReference>
<dbReference type="GO" id="GO:0031902">
    <property type="term" value="C:late endosome membrane"/>
    <property type="evidence" value="ECO:0000250"/>
    <property type="project" value="UniProtKB"/>
</dbReference>
<dbReference type="GO" id="GO:0005765">
    <property type="term" value="C:lysosomal membrane"/>
    <property type="evidence" value="ECO:0000250"/>
    <property type="project" value="UniProtKB"/>
</dbReference>
<dbReference type="GO" id="GO:0016020">
    <property type="term" value="C:membrane"/>
    <property type="evidence" value="ECO:0000266"/>
    <property type="project" value="RGD"/>
</dbReference>
<dbReference type="InterPro" id="IPR004687">
    <property type="entry name" value="LAPTM4/5"/>
</dbReference>
<dbReference type="InterPro" id="IPR018396">
    <property type="entry name" value="LAPTM_4A/5"/>
</dbReference>
<dbReference type="InterPro" id="IPR051115">
    <property type="entry name" value="LAPTM_transporter"/>
</dbReference>
<dbReference type="NCBIfam" id="TIGR00799">
    <property type="entry name" value="mtp"/>
    <property type="match status" value="1"/>
</dbReference>
<dbReference type="PANTHER" id="PTHR12479">
    <property type="entry name" value="LYSOSOMAL-ASSOCIATED TRANSMEMBRANE PROTEIN"/>
    <property type="match status" value="1"/>
</dbReference>
<dbReference type="PANTHER" id="PTHR12479:SF5">
    <property type="entry name" value="LYSOSOMAL-ASSOCIATED TRANSMEMBRANE PROTEIN 4A"/>
    <property type="match status" value="1"/>
</dbReference>
<dbReference type="Pfam" id="PF03821">
    <property type="entry name" value="Mtp"/>
    <property type="match status" value="2"/>
</dbReference>
<comment type="function">
    <text evidence="1">May function in the transport of nucleosides and/or nucleoside derivatives between the cytosol and the lumen of an intracellular membrane-bound compartment.</text>
</comment>
<comment type="subcellular location">
    <subcellularLocation>
        <location evidence="4">Endomembrane system</location>
        <topology evidence="4">Multi-pass membrane protein</topology>
    </subcellularLocation>
    <text evidence="4">May reside in an intracellular membrane-bound compartment.</text>
</comment>
<comment type="domain">
    <text evidence="1">The C-terminal domain is necessary for retention within intracellular membranes.</text>
</comment>
<comment type="similarity">
    <text evidence="4">Belongs to the LAPTM4/LAPTM5 transporter family.</text>
</comment>
<reference key="1">
    <citation type="journal article" date="2004" name="Genome Res.">
        <title>The status, quality, and expansion of the NIH full-length cDNA project: the Mammalian Gene Collection (MGC).</title>
        <authorList>
            <consortium name="The MGC Project Team"/>
        </authorList>
    </citation>
    <scope>NUCLEOTIDE SEQUENCE [LARGE SCALE MRNA]</scope>
    <source>
        <tissue>Pituitary anterior lobe</tissue>
    </source>
</reference>
<protein>
    <recommendedName>
        <fullName>Lysosomal-associated transmembrane protein 4A</fullName>
    </recommendedName>
</protein>
<keyword id="KW-0007">Acetylation</keyword>
<keyword id="KW-0472">Membrane</keyword>
<keyword id="KW-1185">Reference proteome</keyword>
<keyword id="KW-0812">Transmembrane</keyword>
<keyword id="KW-1133">Transmembrane helix</keyword>
<keyword id="KW-0813">Transport</keyword>
<feature type="chain" id="PRO_0000249717" description="Lysosomal-associated transmembrane protein 4A">
    <location>
        <begin position="1"/>
        <end position="233"/>
    </location>
</feature>
<feature type="transmembrane region" description="Helical" evidence="3">
    <location>
        <begin position="29"/>
        <end position="49"/>
    </location>
</feature>
<feature type="transmembrane region" description="Helical" evidence="3">
    <location>
        <begin position="82"/>
        <end position="102"/>
    </location>
</feature>
<feature type="transmembrane region" description="Helical" evidence="3">
    <location>
        <begin position="108"/>
        <end position="128"/>
    </location>
</feature>
<feature type="transmembrane region" description="Helical" evidence="3">
    <location>
        <begin position="160"/>
        <end position="180"/>
    </location>
</feature>
<feature type="modified residue" description="N-acetylmethionine" evidence="2">
    <location>
        <position position="1"/>
    </location>
</feature>
<proteinExistence type="evidence at transcript level"/>
<gene>
    <name type="primary">Laptm4a</name>
</gene>
<evidence type="ECO:0000250" key="1"/>
<evidence type="ECO:0000250" key="2">
    <source>
        <dbReference type="UniProtKB" id="Q15012"/>
    </source>
</evidence>
<evidence type="ECO:0000255" key="3"/>
<evidence type="ECO:0000305" key="4"/>
<accession>Q6P501</accession>